<dbReference type="EMBL" id="CU329672">
    <property type="protein sequence ID" value="CAB52153.1"/>
    <property type="molecule type" value="Genomic_DNA"/>
</dbReference>
<dbReference type="PIR" id="T41199">
    <property type="entry name" value="T41199"/>
</dbReference>
<dbReference type="RefSeq" id="NP_587936.1">
    <property type="nucleotide sequence ID" value="NM_001022927.2"/>
</dbReference>
<dbReference type="PDB" id="3MCA">
    <property type="method" value="X-ray"/>
    <property type="resolution" value="2.74 A"/>
    <property type="chains" value="B=1-390"/>
</dbReference>
<dbReference type="PDBsum" id="3MCA"/>
<dbReference type="SMR" id="Q9USL5"/>
<dbReference type="BioGRID" id="275937">
    <property type="interactions" value="18"/>
</dbReference>
<dbReference type="DIP" id="DIP-59038N"/>
<dbReference type="FunCoup" id="Q9USL5">
    <property type="interactions" value="605"/>
</dbReference>
<dbReference type="IntAct" id="Q9USL5">
    <property type="interactions" value="1"/>
</dbReference>
<dbReference type="STRING" id="284812.Q9USL5"/>
<dbReference type="PaxDb" id="4896-SPCC18B5.06.1"/>
<dbReference type="EnsemblFungi" id="SPCC18B5.06.1">
    <property type="protein sequence ID" value="SPCC18B5.06.1:pep"/>
    <property type="gene ID" value="SPCC18B5.06"/>
</dbReference>
<dbReference type="GeneID" id="2539371"/>
<dbReference type="KEGG" id="spo:2539371"/>
<dbReference type="PomBase" id="SPCC18B5.06">
    <property type="gene designation" value="dom34"/>
</dbReference>
<dbReference type="VEuPathDB" id="FungiDB:SPCC18B5.06"/>
<dbReference type="eggNOG" id="KOG2869">
    <property type="taxonomic scope" value="Eukaryota"/>
</dbReference>
<dbReference type="HOGENOM" id="CLU_023334_3_1_1"/>
<dbReference type="InParanoid" id="Q9USL5"/>
<dbReference type="OMA" id="DDLWHLK"/>
<dbReference type="PhylomeDB" id="Q9USL5"/>
<dbReference type="EvolutionaryTrace" id="Q9USL5"/>
<dbReference type="PRO" id="PR:Q9USL5"/>
<dbReference type="Proteomes" id="UP000002485">
    <property type="component" value="Chromosome III"/>
</dbReference>
<dbReference type="GO" id="GO:0005737">
    <property type="term" value="C:cytoplasm"/>
    <property type="evidence" value="ECO:0000318"/>
    <property type="project" value="GO_Central"/>
</dbReference>
<dbReference type="GO" id="GO:0005829">
    <property type="term" value="C:cytosol"/>
    <property type="evidence" value="ECO:0007005"/>
    <property type="project" value="PomBase"/>
</dbReference>
<dbReference type="GO" id="GO:1990533">
    <property type="term" value="C:Dom34-Hbs1 complex"/>
    <property type="evidence" value="ECO:0000314"/>
    <property type="project" value="PomBase"/>
</dbReference>
<dbReference type="GO" id="GO:0005634">
    <property type="term" value="C:nucleus"/>
    <property type="evidence" value="ECO:0007005"/>
    <property type="project" value="PomBase"/>
</dbReference>
<dbReference type="GO" id="GO:0030695">
    <property type="term" value="F:GTPase regulator activity"/>
    <property type="evidence" value="ECO:0000314"/>
    <property type="project" value="PomBase"/>
</dbReference>
<dbReference type="GO" id="GO:0046872">
    <property type="term" value="F:metal ion binding"/>
    <property type="evidence" value="ECO:0007669"/>
    <property type="project" value="UniProtKB-KW"/>
</dbReference>
<dbReference type="GO" id="GO:0003747">
    <property type="term" value="F:translation release factor activity"/>
    <property type="evidence" value="ECO:0000305"/>
    <property type="project" value="PomBase"/>
</dbReference>
<dbReference type="GO" id="GO:0051301">
    <property type="term" value="P:cell division"/>
    <property type="evidence" value="ECO:0007669"/>
    <property type="project" value="UniProtKB-KW"/>
</dbReference>
<dbReference type="GO" id="GO:0002184">
    <property type="term" value="P:cytoplasmic translational termination"/>
    <property type="evidence" value="ECO:0000269"/>
    <property type="project" value="PomBase"/>
</dbReference>
<dbReference type="GO" id="GO:0030968">
    <property type="term" value="P:endoplasmic reticulum unfolded protein response"/>
    <property type="evidence" value="ECO:0000315"/>
    <property type="project" value="PomBase"/>
</dbReference>
<dbReference type="GO" id="GO:0051321">
    <property type="term" value="P:meiotic cell cycle"/>
    <property type="evidence" value="ECO:0007669"/>
    <property type="project" value="UniProtKB-KW"/>
</dbReference>
<dbReference type="GO" id="GO:0070651">
    <property type="term" value="P:nonfunctional rRNA decay"/>
    <property type="evidence" value="ECO:0000318"/>
    <property type="project" value="GO_Central"/>
</dbReference>
<dbReference type="GO" id="GO:0070966">
    <property type="term" value="P:nuclear-transcribed mRNA catabolic process, no-go decay"/>
    <property type="evidence" value="ECO:0000318"/>
    <property type="project" value="GO_Central"/>
</dbReference>
<dbReference type="GO" id="GO:0070481">
    <property type="term" value="P:nuclear-transcribed mRNA catabolic process, non-stop decay"/>
    <property type="evidence" value="ECO:0000266"/>
    <property type="project" value="PomBase"/>
</dbReference>
<dbReference type="GO" id="GO:0032790">
    <property type="term" value="P:ribosome disassembly"/>
    <property type="evidence" value="ECO:0000318"/>
    <property type="project" value="GO_Central"/>
</dbReference>
<dbReference type="GO" id="GO:0071025">
    <property type="term" value="P:RNA surveillance"/>
    <property type="evidence" value="ECO:0007669"/>
    <property type="project" value="InterPro"/>
</dbReference>
<dbReference type="FunFam" id="3.30.420.60:FF:000004">
    <property type="entry name" value="Protein DOM34 homolog"/>
    <property type="match status" value="1"/>
</dbReference>
<dbReference type="FunFam" id="2.30.30.870:FF:000001">
    <property type="entry name" value="Protein pelota homolog"/>
    <property type="match status" value="1"/>
</dbReference>
<dbReference type="FunFam" id="3.30.1330.30:FF:000008">
    <property type="entry name" value="Protein pelota homolog"/>
    <property type="match status" value="1"/>
</dbReference>
<dbReference type="Gene3D" id="3.30.1330.30">
    <property type="match status" value="1"/>
</dbReference>
<dbReference type="Gene3D" id="3.30.420.60">
    <property type="entry name" value="eRF1 domain 2"/>
    <property type="match status" value="1"/>
</dbReference>
<dbReference type="Gene3D" id="2.30.30.870">
    <property type="entry name" value="Pelota, domain A"/>
    <property type="match status" value="1"/>
</dbReference>
<dbReference type="InterPro" id="IPR042226">
    <property type="entry name" value="eFR1_2_sf"/>
</dbReference>
<dbReference type="InterPro" id="IPR005140">
    <property type="entry name" value="eRF1_1_Pelota"/>
</dbReference>
<dbReference type="InterPro" id="IPR005141">
    <property type="entry name" value="eRF1_2"/>
</dbReference>
<dbReference type="InterPro" id="IPR005142">
    <property type="entry name" value="eRF1_3"/>
</dbReference>
<dbReference type="InterPro" id="IPR038069">
    <property type="entry name" value="Pelota/DOM34_N"/>
</dbReference>
<dbReference type="InterPro" id="IPR029064">
    <property type="entry name" value="Ribosomal_eL30-like_sf"/>
</dbReference>
<dbReference type="InterPro" id="IPR004405">
    <property type="entry name" value="Transl-rel_pelota"/>
</dbReference>
<dbReference type="NCBIfam" id="TIGR00111">
    <property type="entry name" value="pelota"/>
    <property type="match status" value="1"/>
</dbReference>
<dbReference type="PANTHER" id="PTHR10853">
    <property type="entry name" value="PELOTA"/>
    <property type="match status" value="1"/>
</dbReference>
<dbReference type="PANTHER" id="PTHR10853:SF0">
    <property type="entry name" value="PROTEIN PELOTA HOMOLOG"/>
    <property type="match status" value="1"/>
</dbReference>
<dbReference type="Pfam" id="PF03463">
    <property type="entry name" value="eRF1_1"/>
    <property type="match status" value="1"/>
</dbReference>
<dbReference type="Pfam" id="PF03464">
    <property type="entry name" value="eRF1_2"/>
    <property type="match status" value="1"/>
</dbReference>
<dbReference type="Pfam" id="PF03465">
    <property type="entry name" value="eRF1_3"/>
    <property type="match status" value="1"/>
</dbReference>
<dbReference type="SMART" id="SM01194">
    <property type="entry name" value="eRF1_1"/>
    <property type="match status" value="1"/>
</dbReference>
<dbReference type="SUPFAM" id="SSF159065">
    <property type="entry name" value="Dom34/Pelota N-terminal domain-like"/>
    <property type="match status" value="1"/>
</dbReference>
<dbReference type="SUPFAM" id="SSF55315">
    <property type="entry name" value="L30e-like"/>
    <property type="match status" value="1"/>
</dbReference>
<dbReference type="SUPFAM" id="SSF53137">
    <property type="entry name" value="Translational machinery components"/>
    <property type="match status" value="1"/>
</dbReference>
<evidence type="ECO:0000250" key="1">
    <source>
        <dbReference type="UniProtKB" id="P33309"/>
    </source>
</evidence>
<evidence type="ECO:0000255" key="2"/>
<evidence type="ECO:0000269" key="3">
    <source>
    </source>
</evidence>
<evidence type="ECO:0000269" key="4">
    <source>
    </source>
</evidence>
<evidence type="ECO:0000303" key="5">
    <source>
    </source>
</evidence>
<evidence type="ECO:0000305" key="6"/>
<evidence type="ECO:0000312" key="7">
    <source>
        <dbReference type="EMBL" id="CAB52153.1"/>
    </source>
</evidence>
<evidence type="ECO:0000312" key="8">
    <source>
        <dbReference type="PomBase" id="SPCC18B5.06"/>
    </source>
</evidence>
<evidence type="ECO:0007744" key="9">
    <source>
        <dbReference type="PDB" id="3MCA"/>
    </source>
</evidence>
<evidence type="ECO:0007829" key="10">
    <source>
        <dbReference type="PDB" id="3MCA"/>
    </source>
</evidence>
<feature type="chain" id="PRO_0000326089" description="Protein dom34">
    <location>
        <begin position="1"/>
        <end position="390"/>
    </location>
</feature>
<feature type="helix" evidence="10">
    <location>
        <begin position="24"/>
        <end position="32"/>
    </location>
</feature>
<feature type="strand" evidence="10">
    <location>
        <begin position="38"/>
        <end position="40"/>
    </location>
</feature>
<feature type="strand" evidence="10">
    <location>
        <begin position="72"/>
        <end position="74"/>
    </location>
</feature>
<feature type="strand" evidence="10">
    <location>
        <begin position="81"/>
        <end position="83"/>
    </location>
</feature>
<feature type="strand" evidence="10">
    <location>
        <begin position="106"/>
        <end position="108"/>
    </location>
</feature>
<feature type="helix" evidence="10">
    <location>
        <begin position="119"/>
        <end position="125"/>
    </location>
</feature>
<feature type="strand" evidence="10">
    <location>
        <begin position="128"/>
        <end position="130"/>
    </location>
</feature>
<feature type="strand" evidence="10">
    <location>
        <begin position="137"/>
        <end position="143"/>
    </location>
</feature>
<feature type="strand" evidence="10">
    <location>
        <begin position="146"/>
        <end position="152"/>
    </location>
</feature>
<feature type="strand" evidence="10">
    <location>
        <begin position="157"/>
        <end position="164"/>
    </location>
</feature>
<feature type="helix" evidence="10">
    <location>
        <begin position="176"/>
        <end position="196"/>
    </location>
</feature>
<feature type="turn" evidence="10">
    <location>
        <begin position="199"/>
        <end position="201"/>
    </location>
</feature>
<feature type="strand" evidence="10">
    <location>
        <begin position="203"/>
        <end position="212"/>
    </location>
</feature>
<feature type="helix" evidence="10">
    <location>
        <begin position="213"/>
        <end position="227"/>
    </location>
</feature>
<feature type="helix" evidence="10">
    <location>
        <begin position="231"/>
        <end position="236"/>
    </location>
</feature>
<feature type="helix" evidence="10">
    <location>
        <begin position="237"/>
        <end position="239"/>
    </location>
</feature>
<feature type="strand" evidence="10">
    <location>
        <begin position="240"/>
        <end position="244"/>
    </location>
</feature>
<feature type="helix" evidence="10">
    <location>
        <begin position="250"/>
        <end position="254"/>
    </location>
</feature>
<feature type="strand" evidence="10">
    <location>
        <begin position="256"/>
        <end position="258"/>
    </location>
</feature>
<feature type="helix" evidence="10">
    <location>
        <begin position="260"/>
        <end position="266"/>
    </location>
</feature>
<feature type="helix" evidence="10">
    <location>
        <begin position="270"/>
        <end position="287"/>
    </location>
</feature>
<feature type="strand" evidence="10">
    <location>
        <begin position="291"/>
        <end position="295"/>
    </location>
</feature>
<feature type="helix" evidence="10">
    <location>
        <begin position="296"/>
        <end position="304"/>
    </location>
</feature>
<feature type="strand" evidence="10">
    <location>
        <begin position="308"/>
        <end position="310"/>
    </location>
</feature>
<feature type="strand" evidence="10">
    <location>
        <begin position="312"/>
        <end position="315"/>
    </location>
</feature>
<feature type="helix" evidence="10">
    <location>
        <begin position="323"/>
        <end position="338"/>
    </location>
</feature>
<feature type="strand" evidence="10">
    <location>
        <begin position="343"/>
        <end position="346"/>
    </location>
</feature>
<feature type="helix" evidence="10">
    <location>
        <begin position="351"/>
        <end position="358"/>
    </location>
</feature>
<feature type="strand" evidence="10">
    <location>
        <begin position="361"/>
        <end position="368"/>
    </location>
</feature>
<keyword id="KW-0002">3D-structure</keyword>
<keyword id="KW-0131">Cell cycle</keyword>
<keyword id="KW-0132">Cell division</keyword>
<keyword id="KW-0963">Cytoplasm</keyword>
<keyword id="KW-0469">Meiosis</keyword>
<keyword id="KW-0479">Metal-binding</keyword>
<keyword id="KW-0498">Mitosis</keyword>
<keyword id="KW-1185">Reference proteome</keyword>
<comment type="function">
    <text evidence="1 4">Component of the Dom34-Hbs1 complex, a complex that recognizes stalled ribosomes and triggers the No-Go Decay (NGD) pathway (PubMed:20890290). In the Dom34-Hbs1 complex, dom34 recognizes ribosomes stalled at the 3' end of an mRNA and engages stalled ribosomes by destabilizing mRNA in the mRNA channel (By similarity). Following ribosome-binding, the Dom34-Hbs1 complex promotes the disassembly of stalled ribosomes, followed by degradation of damaged mRNAs as part of the NGD pathway (By similarity).</text>
</comment>
<comment type="cofactor">
    <cofactor evidence="1">
        <name>a divalent metal cation</name>
        <dbReference type="ChEBI" id="CHEBI:60240"/>
    </cofactor>
</comment>
<comment type="subunit">
    <text evidence="1">Component of the Dom34-Hbs1 complex, also named Pelota-HBS1L complex, composed of dom34 and hbs1.</text>
</comment>
<comment type="interaction">
    <interactant intactId="EBI-15882140">
        <id>Q9USL5</id>
    </interactant>
    <interactant intactId="EBI-15882111">
        <id>O74774</id>
        <label>hbs1</label>
    </interactant>
    <organismsDiffer>false</organismsDiffer>
    <experiments>5</experiments>
</comment>
<comment type="subcellular location">
    <subcellularLocation>
        <location evidence="3">Cytoplasm</location>
    </subcellularLocation>
</comment>
<comment type="similarity">
    <text evidence="2">Belongs to the eukaryotic release factor 1 family. Pelota subfamily.</text>
</comment>
<protein>
    <recommendedName>
        <fullName>Protein dom34</fullName>
    </recommendedName>
</protein>
<proteinExistence type="evidence at protein level"/>
<accession>Q9USL5</accession>
<sequence length="390" mass="44337">MKLIQKNIEKNGSGWITMCPEEPEDMWHLYNILQVGDQLKASTVRRVVKVGATGSTSGSRVVMKLRILVENMDFDTKAAQLHIKGRTTEYHPEVKMGSYHTLDLELHRNFTLYKNEWDAFALDRVDAACNPSRNAEIGAVVLDEGLANICLITDYMTILRQRIDQVIPRKRRGDSSAYQKGLDKFYDSVFQSINSEFDFDKLKVVILASPGFVARGLYDYIFSMAVKLDLKQIVKSKNKFVILHSSTGHIHSLNEILKDPAVESKLADTKYVQEIRVLNKFYDVMNEDDRKAWYGPNHVLKAFELGAIGELLISDSLFRSSDIATRKKWVSLVEGVKEINCPVYIFSSLHESGKQLDLLSGIAAILTYPVDEEDISEDEEDEESQNFEHS</sequence>
<organism>
    <name type="scientific">Schizosaccharomyces pombe (strain 972 / ATCC 24843)</name>
    <name type="common">Fission yeast</name>
    <dbReference type="NCBI Taxonomy" id="284812"/>
    <lineage>
        <taxon>Eukaryota</taxon>
        <taxon>Fungi</taxon>
        <taxon>Dikarya</taxon>
        <taxon>Ascomycota</taxon>
        <taxon>Taphrinomycotina</taxon>
        <taxon>Schizosaccharomycetes</taxon>
        <taxon>Schizosaccharomycetales</taxon>
        <taxon>Schizosaccharomycetaceae</taxon>
        <taxon>Schizosaccharomyces</taxon>
    </lineage>
</organism>
<reference evidence="7" key="1">
    <citation type="journal article" date="2002" name="Nature">
        <title>The genome sequence of Schizosaccharomyces pombe.</title>
        <authorList>
            <person name="Wood V."/>
            <person name="Gwilliam R."/>
            <person name="Rajandream M.A."/>
            <person name="Lyne M.H."/>
            <person name="Lyne R."/>
            <person name="Stewart A."/>
            <person name="Sgouros J.G."/>
            <person name="Peat N."/>
            <person name="Hayles J."/>
            <person name="Baker S.G."/>
            <person name="Basham D."/>
            <person name="Bowman S."/>
            <person name="Brooks K."/>
            <person name="Brown D."/>
            <person name="Brown S."/>
            <person name="Chillingworth T."/>
            <person name="Churcher C.M."/>
            <person name="Collins M."/>
            <person name="Connor R."/>
            <person name="Cronin A."/>
            <person name="Davis P."/>
            <person name="Feltwell T."/>
            <person name="Fraser A."/>
            <person name="Gentles S."/>
            <person name="Goble A."/>
            <person name="Hamlin N."/>
            <person name="Harris D.E."/>
            <person name="Hidalgo J."/>
            <person name="Hodgson G."/>
            <person name="Holroyd S."/>
            <person name="Hornsby T."/>
            <person name="Howarth S."/>
            <person name="Huckle E.J."/>
            <person name="Hunt S."/>
            <person name="Jagels K."/>
            <person name="James K.D."/>
            <person name="Jones L."/>
            <person name="Jones M."/>
            <person name="Leather S."/>
            <person name="McDonald S."/>
            <person name="McLean J."/>
            <person name="Mooney P."/>
            <person name="Moule S."/>
            <person name="Mungall K.L."/>
            <person name="Murphy L.D."/>
            <person name="Niblett D."/>
            <person name="Odell C."/>
            <person name="Oliver K."/>
            <person name="O'Neil S."/>
            <person name="Pearson D."/>
            <person name="Quail M.A."/>
            <person name="Rabbinowitsch E."/>
            <person name="Rutherford K.M."/>
            <person name="Rutter S."/>
            <person name="Saunders D."/>
            <person name="Seeger K."/>
            <person name="Sharp S."/>
            <person name="Skelton J."/>
            <person name="Simmonds M.N."/>
            <person name="Squares R."/>
            <person name="Squares S."/>
            <person name="Stevens K."/>
            <person name="Taylor K."/>
            <person name="Taylor R.G."/>
            <person name="Tivey A."/>
            <person name="Walsh S.V."/>
            <person name="Warren T."/>
            <person name="Whitehead S."/>
            <person name="Woodward J.R."/>
            <person name="Volckaert G."/>
            <person name="Aert R."/>
            <person name="Robben J."/>
            <person name="Grymonprez B."/>
            <person name="Weltjens I."/>
            <person name="Vanstreels E."/>
            <person name="Rieger M."/>
            <person name="Schaefer M."/>
            <person name="Mueller-Auer S."/>
            <person name="Gabel C."/>
            <person name="Fuchs M."/>
            <person name="Duesterhoeft A."/>
            <person name="Fritzc C."/>
            <person name="Holzer E."/>
            <person name="Moestl D."/>
            <person name="Hilbert H."/>
            <person name="Borzym K."/>
            <person name="Langer I."/>
            <person name="Beck A."/>
            <person name="Lehrach H."/>
            <person name="Reinhardt R."/>
            <person name="Pohl T.M."/>
            <person name="Eger P."/>
            <person name="Zimmermann W."/>
            <person name="Wedler H."/>
            <person name="Wambutt R."/>
            <person name="Purnelle B."/>
            <person name="Goffeau A."/>
            <person name="Cadieu E."/>
            <person name="Dreano S."/>
            <person name="Gloux S."/>
            <person name="Lelaure V."/>
            <person name="Mottier S."/>
            <person name="Galibert F."/>
            <person name="Aves S.J."/>
            <person name="Xiang Z."/>
            <person name="Hunt C."/>
            <person name="Moore K."/>
            <person name="Hurst S.M."/>
            <person name="Lucas M."/>
            <person name="Rochet M."/>
            <person name="Gaillardin C."/>
            <person name="Tallada V.A."/>
            <person name="Garzon A."/>
            <person name="Thode G."/>
            <person name="Daga R.R."/>
            <person name="Cruzado L."/>
            <person name="Jimenez J."/>
            <person name="Sanchez M."/>
            <person name="del Rey F."/>
            <person name="Benito J."/>
            <person name="Dominguez A."/>
            <person name="Revuelta J.L."/>
            <person name="Moreno S."/>
            <person name="Armstrong J."/>
            <person name="Forsburg S.L."/>
            <person name="Cerutti L."/>
            <person name="Lowe T."/>
            <person name="McCombie W.R."/>
            <person name="Paulsen I."/>
            <person name="Potashkin J."/>
            <person name="Shpakovski G.V."/>
            <person name="Ussery D."/>
            <person name="Barrell B.G."/>
            <person name="Nurse P."/>
        </authorList>
    </citation>
    <scope>NUCLEOTIDE SEQUENCE [LARGE SCALE GENOMIC DNA]</scope>
    <source>
        <strain>972 / ATCC 24843</strain>
    </source>
</reference>
<reference evidence="6" key="2">
    <citation type="journal article" date="2006" name="Nat. Biotechnol.">
        <title>ORFeome cloning and global analysis of protein localization in the fission yeast Schizosaccharomyces pombe.</title>
        <authorList>
            <person name="Matsuyama A."/>
            <person name="Arai R."/>
            <person name="Yashiroda Y."/>
            <person name="Shirai A."/>
            <person name="Kamata A."/>
            <person name="Sekido S."/>
            <person name="Kobayashi Y."/>
            <person name="Hashimoto A."/>
            <person name="Hamamoto M."/>
            <person name="Hiraoka Y."/>
            <person name="Horinouchi S."/>
            <person name="Yoshida M."/>
        </authorList>
    </citation>
    <scope>SUBCELLULAR LOCATION [LARGE SCALE ANALYSIS]</scope>
</reference>
<reference evidence="9" key="3">
    <citation type="journal article" date="2010" name="Nat. Struct. Mol. Biol.">
        <title>Structure of the Dom34-Hbs1 complex and implications for no-go decay.</title>
        <authorList>
            <person name="Chen L."/>
            <person name="Muhlrad D."/>
            <person name="Hauryliuk V."/>
            <person name="Cheng Z."/>
            <person name="Lim M.K."/>
            <person name="Shyp V."/>
            <person name="Parker R."/>
            <person name="Song H."/>
        </authorList>
    </citation>
    <scope>X-RAY CRYSTALLOGRAPHY (2.74 ANGSTROMS) IN COMPLE WITH HBS1</scope>
    <scope>FUNCTION</scope>
    <scope>IDENTIFICATION IN THE DOM34-HBS1 COMPLEX</scope>
</reference>
<gene>
    <name evidence="5 8" type="primary">dom34</name>
    <name type="ORF">SPCC18B5.06</name>
</gene>
<name>DOM34_SCHPO</name>